<accession>Q5HG64</accession>
<sequence>MSEIIQDLSLEDVLGDRFGRYSKYIIQERALPDVRDGLKPVQRRILYAMYSSGNTHDKNFRKSAKTVGDVIGQYHPHGDSSVYEAMVRLSQDWKLRHVLIEMHGNNGSIDNDPPAAMRYTEAKLSLLAEELLRDINKETVSFIPNYDDTTLEPMVLPSRFPNLLVNGSTGISAGYATDIPPHNLAEVIQATLKYIDNPDITVNQLMKYIKGPDFPTGGIIQGIDGIKKAYESGKGRIIVRSKVEEETLRNGRKQLIITEIPYEVNKSSLVKRIDELRADKKVDGIVEVRDETDRTGLRIAIELKKDVNSESIKNYLYKNSDLQISYNFNMVAISDGRPKLMGIRQIIDSYLNHQIEVVANRTKFELDNAEKRMHIVEGLIKALSILDKVIELIRSSKNKRDAKENLIEVYEFTEEQAEAIVMLQLYRLTNTDIVALEGEHKELEALIKQLRHILDNHDALLNVIKEELNEIKKKFKSERLSLIEAEIEEIKIDKEVMVPSEEVILSMTRHGYIKRTSIRSFNASGVEDIGLKDGDSLLKHQEVNTQDTVLVFTNKGRYLFIPVHKLADIRWKELGQHVSQIVPIEEDEVVINVFNEKDFNTDAFYVFATQNGMIKKSTVPLFKTTRFNKPLIATKVKENDDLISVMRFEKDQLITVITNKGMSLTYNTSELSDTGLRAAGVKSINLKAEDFVVMTEGVSENDTILMATQRGSLKRISFKILQVAKRAQRGITLLKELKKNPHRIVAAHVVTGEHSQYTLYSKSNEEHGLINDIHKSEQYTNGSFIVDTDDFGEVIDMYIS</sequence>
<organism>
    <name type="scientific">Staphylococcus aureus (strain COL)</name>
    <dbReference type="NCBI Taxonomy" id="93062"/>
    <lineage>
        <taxon>Bacteria</taxon>
        <taxon>Bacillati</taxon>
        <taxon>Bacillota</taxon>
        <taxon>Bacilli</taxon>
        <taxon>Bacillales</taxon>
        <taxon>Staphylococcaceae</taxon>
        <taxon>Staphylococcus</taxon>
    </lineage>
</organism>
<proteinExistence type="inferred from homology"/>
<feature type="chain" id="PRO_0000145409" description="DNA topoisomerase 4 subunit A">
    <location>
        <begin position="1"/>
        <end position="800"/>
    </location>
</feature>
<feature type="domain" description="Topo IIA-type catalytic" evidence="2">
    <location>
        <begin position="31"/>
        <end position="495"/>
    </location>
</feature>
<feature type="active site" description="O-(5'-phospho-DNA)-tyrosine intermediate" evidence="1">
    <location>
        <position position="119"/>
    </location>
</feature>
<feature type="site" description="Interaction with DNA" evidence="1">
    <location>
        <position position="39"/>
    </location>
</feature>
<feature type="site" description="Interaction with DNA" evidence="1">
    <location>
        <position position="75"/>
    </location>
</feature>
<feature type="site" description="Interaction with DNA" evidence="1">
    <location>
        <position position="77"/>
    </location>
</feature>
<feature type="site" description="Interaction with DNA" evidence="1">
    <location>
        <position position="88"/>
    </location>
</feature>
<feature type="site" description="Interaction with DNA" evidence="1">
    <location>
        <position position="94"/>
    </location>
</feature>
<feature type="site" description="Transition state stabilizer" evidence="1">
    <location>
        <position position="118"/>
    </location>
</feature>
<keyword id="KW-1003">Cell membrane</keyword>
<keyword id="KW-0238">DNA-binding</keyword>
<keyword id="KW-0413">Isomerase</keyword>
<keyword id="KW-0472">Membrane</keyword>
<keyword id="KW-0799">Topoisomerase</keyword>
<evidence type="ECO:0000255" key="1">
    <source>
        <dbReference type="HAMAP-Rule" id="MF_00937"/>
    </source>
</evidence>
<evidence type="ECO:0000255" key="2">
    <source>
        <dbReference type="PROSITE-ProRule" id="PRU01384"/>
    </source>
</evidence>
<protein>
    <recommendedName>
        <fullName evidence="1">DNA topoisomerase 4 subunit A</fullName>
        <ecNumber evidence="1">5.6.2.2</ecNumber>
    </recommendedName>
    <alternativeName>
        <fullName evidence="1">Topoisomerase IV subunit A</fullName>
    </alternativeName>
</protein>
<dbReference type="EC" id="5.6.2.2" evidence="1"/>
<dbReference type="EMBL" id="CP000046">
    <property type="protein sequence ID" value="AAW36639.1"/>
    <property type="molecule type" value="Genomic_DNA"/>
</dbReference>
<dbReference type="RefSeq" id="WP_001289569.1">
    <property type="nucleotide sequence ID" value="NZ_JBGOFO010000003.1"/>
</dbReference>
<dbReference type="SMR" id="Q5HG64"/>
<dbReference type="KEGG" id="sac:SACOL1390"/>
<dbReference type="HOGENOM" id="CLU_002977_6_1_9"/>
<dbReference type="Proteomes" id="UP000000530">
    <property type="component" value="Chromosome"/>
</dbReference>
<dbReference type="GO" id="GO:0005694">
    <property type="term" value="C:chromosome"/>
    <property type="evidence" value="ECO:0007669"/>
    <property type="project" value="InterPro"/>
</dbReference>
<dbReference type="GO" id="GO:0005737">
    <property type="term" value="C:cytoplasm"/>
    <property type="evidence" value="ECO:0007669"/>
    <property type="project" value="TreeGrafter"/>
</dbReference>
<dbReference type="GO" id="GO:0009330">
    <property type="term" value="C:DNA topoisomerase type II (double strand cut, ATP-hydrolyzing) complex"/>
    <property type="evidence" value="ECO:0007669"/>
    <property type="project" value="TreeGrafter"/>
</dbReference>
<dbReference type="GO" id="GO:0019897">
    <property type="term" value="C:extrinsic component of plasma membrane"/>
    <property type="evidence" value="ECO:0007669"/>
    <property type="project" value="UniProtKB-UniRule"/>
</dbReference>
<dbReference type="GO" id="GO:0005524">
    <property type="term" value="F:ATP binding"/>
    <property type="evidence" value="ECO:0007669"/>
    <property type="project" value="InterPro"/>
</dbReference>
<dbReference type="GO" id="GO:0003677">
    <property type="term" value="F:DNA binding"/>
    <property type="evidence" value="ECO:0007669"/>
    <property type="project" value="UniProtKB-UniRule"/>
</dbReference>
<dbReference type="GO" id="GO:0034335">
    <property type="term" value="F:DNA negative supercoiling activity"/>
    <property type="evidence" value="ECO:0007669"/>
    <property type="project" value="UniProtKB-ARBA"/>
</dbReference>
<dbReference type="GO" id="GO:0007059">
    <property type="term" value="P:chromosome segregation"/>
    <property type="evidence" value="ECO:0007669"/>
    <property type="project" value="UniProtKB-UniRule"/>
</dbReference>
<dbReference type="GO" id="GO:0006265">
    <property type="term" value="P:DNA topological change"/>
    <property type="evidence" value="ECO:0007669"/>
    <property type="project" value="UniProtKB-UniRule"/>
</dbReference>
<dbReference type="CDD" id="cd00187">
    <property type="entry name" value="TOP4c"/>
    <property type="match status" value="1"/>
</dbReference>
<dbReference type="FunFam" id="1.10.268.10:FF:000001">
    <property type="entry name" value="DNA gyrase subunit A"/>
    <property type="match status" value="1"/>
</dbReference>
<dbReference type="FunFam" id="3.30.1360.40:FF:000002">
    <property type="entry name" value="DNA gyrase subunit A"/>
    <property type="match status" value="1"/>
</dbReference>
<dbReference type="FunFam" id="3.90.199.10:FF:000001">
    <property type="entry name" value="DNA gyrase subunit A"/>
    <property type="match status" value="1"/>
</dbReference>
<dbReference type="FunFam" id="2.120.10.90:FF:000005">
    <property type="entry name" value="DNA topoisomerase 4 subunit A"/>
    <property type="match status" value="1"/>
</dbReference>
<dbReference type="Gene3D" id="3.30.1360.40">
    <property type="match status" value="1"/>
</dbReference>
<dbReference type="Gene3D" id="2.120.10.90">
    <property type="entry name" value="DNA gyrase/topoisomerase IV, subunit A, C-terminal"/>
    <property type="match status" value="1"/>
</dbReference>
<dbReference type="Gene3D" id="3.90.199.10">
    <property type="entry name" value="Topoisomerase II, domain 5"/>
    <property type="match status" value="1"/>
</dbReference>
<dbReference type="Gene3D" id="1.10.268.10">
    <property type="entry name" value="Topoisomerase, domain 3"/>
    <property type="match status" value="1"/>
</dbReference>
<dbReference type="HAMAP" id="MF_00937">
    <property type="entry name" value="ParC_type2"/>
    <property type="match status" value="1"/>
</dbReference>
<dbReference type="InterPro" id="IPR006691">
    <property type="entry name" value="GyrA/parC_rep"/>
</dbReference>
<dbReference type="InterPro" id="IPR035516">
    <property type="entry name" value="Gyrase/topoIV_suA_C"/>
</dbReference>
<dbReference type="InterPro" id="IPR013760">
    <property type="entry name" value="Topo_IIA-like_dom_sf"/>
</dbReference>
<dbReference type="InterPro" id="IPR013758">
    <property type="entry name" value="Topo_IIA_A/C_ab"/>
</dbReference>
<dbReference type="InterPro" id="IPR013757">
    <property type="entry name" value="Topo_IIA_A_a_sf"/>
</dbReference>
<dbReference type="InterPro" id="IPR002205">
    <property type="entry name" value="Topo_IIA_dom_A"/>
</dbReference>
<dbReference type="InterPro" id="IPR005741">
    <property type="entry name" value="TopoIV_A_Gpos"/>
</dbReference>
<dbReference type="InterPro" id="IPR050220">
    <property type="entry name" value="Type_II_DNA_Topoisomerases"/>
</dbReference>
<dbReference type="NCBIfam" id="TIGR01061">
    <property type="entry name" value="parC_Gpos"/>
    <property type="match status" value="1"/>
</dbReference>
<dbReference type="NCBIfam" id="NF004044">
    <property type="entry name" value="PRK05561.1"/>
    <property type="match status" value="1"/>
</dbReference>
<dbReference type="PANTHER" id="PTHR43493">
    <property type="entry name" value="DNA GYRASE/TOPOISOMERASE SUBUNIT A"/>
    <property type="match status" value="1"/>
</dbReference>
<dbReference type="PANTHER" id="PTHR43493:SF9">
    <property type="entry name" value="DNA TOPOISOMERASE 4 SUBUNIT A"/>
    <property type="match status" value="1"/>
</dbReference>
<dbReference type="Pfam" id="PF03989">
    <property type="entry name" value="DNA_gyraseA_C"/>
    <property type="match status" value="5"/>
</dbReference>
<dbReference type="Pfam" id="PF00521">
    <property type="entry name" value="DNA_topoisoIV"/>
    <property type="match status" value="1"/>
</dbReference>
<dbReference type="SMART" id="SM00434">
    <property type="entry name" value="TOP4c"/>
    <property type="match status" value="1"/>
</dbReference>
<dbReference type="SUPFAM" id="SSF101904">
    <property type="entry name" value="GyrA/ParC C-terminal domain-like"/>
    <property type="match status" value="1"/>
</dbReference>
<dbReference type="SUPFAM" id="SSF56719">
    <property type="entry name" value="Type II DNA topoisomerase"/>
    <property type="match status" value="1"/>
</dbReference>
<dbReference type="PROSITE" id="PS52040">
    <property type="entry name" value="TOPO_IIA"/>
    <property type="match status" value="1"/>
</dbReference>
<comment type="function">
    <text evidence="1">Topoisomerase IV is essential for chromosome segregation. It relaxes supercoiled DNA. Performs the decatenation events required during the replication of a circular DNA molecule.</text>
</comment>
<comment type="catalytic activity">
    <reaction evidence="1">
        <text>ATP-dependent breakage, passage and rejoining of double-stranded DNA.</text>
        <dbReference type="EC" id="5.6.2.2"/>
    </reaction>
</comment>
<comment type="subunit">
    <text evidence="1">Heterotetramer composed of ParC and ParE.</text>
</comment>
<comment type="subcellular location">
    <subcellularLocation>
        <location evidence="1">Cell membrane</location>
        <topology evidence="1">Peripheral membrane protein</topology>
    </subcellularLocation>
</comment>
<comment type="similarity">
    <text evidence="1">Belongs to the type II topoisomerase GyrA/ParC subunit family. ParC type 2 subfamily.</text>
</comment>
<reference key="1">
    <citation type="journal article" date="2005" name="J. Bacteriol.">
        <title>Insights on evolution of virulence and resistance from the complete genome analysis of an early methicillin-resistant Staphylococcus aureus strain and a biofilm-producing methicillin-resistant Staphylococcus epidermidis strain.</title>
        <authorList>
            <person name="Gill S.R."/>
            <person name="Fouts D.E."/>
            <person name="Archer G.L."/>
            <person name="Mongodin E.F."/>
            <person name="DeBoy R.T."/>
            <person name="Ravel J."/>
            <person name="Paulsen I.T."/>
            <person name="Kolonay J.F."/>
            <person name="Brinkac L.M."/>
            <person name="Beanan M.J."/>
            <person name="Dodson R.J."/>
            <person name="Daugherty S.C."/>
            <person name="Madupu R."/>
            <person name="Angiuoli S.V."/>
            <person name="Durkin A.S."/>
            <person name="Haft D.H."/>
            <person name="Vamathevan J.J."/>
            <person name="Khouri H."/>
            <person name="Utterback T.R."/>
            <person name="Lee C."/>
            <person name="Dimitrov G."/>
            <person name="Jiang L."/>
            <person name="Qin H."/>
            <person name="Weidman J."/>
            <person name="Tran K."/>
            <person name="Kang K.H."/>
            <person name="Hance I.R."/>
            <person name="Nelson K.E."/>
            <person name="Fraser C.M."/>
        </authorList>
    </citation>
    <scope>NUCLEOTIDE SEQUENCE [LARGE SCALE GENOMIC DNA]</scope>
    <source>
        <strain>COL</strain>
    </source>
</reference>
<name>PARC_STAAC</name>
<gene>
    <name evidence="1" type="primary">parC</name>
    <name type="ordered locus">SACOL1390</name>
</gene>